<reference key="1">
    <citation type="journal article" date="2010" name="J. Bacteriol.">
        <title>The genetic basis of laboratory adaptation in Caulobacter crescentus.</title>
        <authorList>
            <person name="Marks M.E."/>
            <person name="Castro-Rojas C.M."/>
            <person name="Teiling C."/>
            <person name="Du L."/>
            <person name="Kapatral V."/>
            <person name="Walunas T.L."/>
            <person name="Crosson S."/>
        </authorList>
    </citation>
    <scope>NUCLEOTIDE SEQUENCE [LARGE SCALE GENOMIC DNA]</scope>
    <source>
        <strain>NA1000 / CB15N</strain>
    </source>
</reference>
<organism>
    <name type="scientific">Caulobacter vibrioides (strain NA1000 / CB15N)</name>
    <name type="common">Caulobacter crescentus</name>
    <dbReference type="NCBI Taxonomy" id="565050"/>
    <lineage>
        <taxon>Bacteria</taxon>
        <taxon>Pseudomonadati</taxon>
        <taxon>Pseudomonadota</taxon>
        <taxon>Alphaproteobacteria</taxon>
        <taxon>Caulobacterales</taxon>
        <taxon>Caulobacteraceae</taxon>
        <taxon>Caulobacter</taxon>
    </lineage>
</organism>
<sequence length="121" mass="12680">MRFTKDHEWVIVEGDVATVGITAYAAEQLGDVVFVETPEAGKVVKQGEGLAVVESVKAASDVYAPVSGEVIEGNGELAGAPETVNALPESGGWFAKIKLANPAELDALMDRDAYEAFLGTL</sequence>
<comment type="function">
    <text evidence="1">The glycine cleavage system catalyzes the degradation of glycine. The H protein shuttles the methylamine group of glycine from the P protein to the T protein.</text>
</comment>
<comment type="cofactor">
    <cofactor evidence="1">
        <name>(R)-lipoate</name>
        <dbReference type="ChEBI" id="CHEBI:83088"/>
    </cofactor>
    <text evidence="1">Binds 1 lipoyl cofactor covalently.</text>
</comment>
<comment type="subunit">
    <text evidence="1">The glycine cleavage system is composed of four proteins: P, T, L and H.</text>
</comment>
<comment type="similarity">
    <text evidence="1">Belongs to the GcvH family.</text>
</comment>
<evidence type="ECO:0000255" key="1">
    <source>
        <dbReference type="HAMAP-Rule" id="MF_00272"/>
    </source>
</evidence>
<evidence type="ECO:0000255" key="2">
    <source>
        <dbReference type="PROSITE-ProRule" id="PRU01066"/>
    </source>
</evidence>
<keyword id="KW-0450">Lipoyl</keyword>
<keyword id="KW-1185">Reference proteome</keyword>
<proteinExistence type="inferred from homology"/>
<gene>
    <name evidence="1" type="primary">gcvH</name>
    <name type="ordered locus">CCNA_03464</name>
</gene>
<feature type="chain" id="PRO_1000190195" description="Glycine cleavage system H protein">
    <location>
        <begin position="1"/>
        <end position="121"/>
    </location>
</feature>
<feature type="domain" description="Lipoyl-binding" evidence="2">
    <location>
        <begin position="16"/>
        <end position="98"/>
    </location>
</feature>
<feature type="modified residue" description="N6-lipoyllysine" evidence="1">
    <location>
        <position position="57"/>
    </location>
</feature>
<name>GCSH_CAUVN</name>
<accession>B8H4V5</accession>
<dbReference type="EMBL" id="CP001340">
    <property type="protein sequence ID" value="ACL96929.1"/>
    <property type="molecule type" value="Genomic_DNA"/>
</dbReference>
<dbReference type="RefSeq" id="WP_010921183.1">
    <property type="nucleotide sequence ID" value="NC_011916.1"/>
</dbReference>
<dbReference type="RefSeq" id="YP_002518837.1">
    <property type="nucleotide sequence ID" value="NC_011916.1"/>
</dbReference>
<dbReference type="SMR" id="B8H4V5"/>
<dbReference type="GeneID" id="7332461"/>
<dbReference type="KEGG" id="ccs:CCNA_03464"/>
<dbReference type="PATRIC" id="fig|565050.3.peg.3378"/>
<dbReference type="HOGENOM" id="CLU_097408_2_0_5"/>
<dbReference type="OrthoDB" id="9796712at2"/>
<dbReference type="PhylomeDB" id="B8H4V5"/>
<dbReference type="Proteomes" id="UP000001364">
    <property type="component" value="Chromosome"/>
</dbReference>
<dbReference type="GO" id="GO:0005737">
    <property type="term" value="C:cytoplasm"/>
    <property type="evidence" value="ECO:0007669"/>
    <property type="project" value="TreeGrafter"/>
</dbReference>
<dbReference type="GO" id="GO:0005960">
    <property type="term" value="C:glycine cleavage complex"/>
    <property type="evidence" value="ECO:0007669"/>
    <property type="project" value="InterPro"/>
</dbReference>
<dbReference type="GO" id="GO:0019464">
    <property type="term" value="P:glycine decarboxylation via glycine cleavage system"/>
    <property type="evidence" value="ECO:0007669"/>
    <property type="project" value="UniProtKB-UniRule"/>
</dbReference>
<dbReference type="CDD" id="cd06848">
    <property type="entry name" value="GCS_H"/>
    <property type="match status" value="1"/>
</dbReference>
<dbReference type="Gene3D" id="2.40.50.100">
    <property type="match status" value="1"/>
</dbReference>
<dbReference type="HAMAP" id="MF_00272">
    <property type="entry name" value="GcvH"/>
    <property type="match status" value="1"/>
</dbReference>
<dbReference type="InterPro" id="IPR003016">
    <property type="entry name" value="2-oxoA_DH_lipoyl-BS"/>
</dbReference>
<dbReference type="InterPro" id="IPR000089">
    <property type="entry name" value="Biotin_lipoyl"/>
</dbReference>
<dbReference type="InterPro" id="IPR002930">
    <property type="entry name" value="GCV_H"/>
</dbReference>
<dbReference type="InterPro" id="IPR033753">
    <property type="entry name" value="GCV_H/Fam206"/>
</dbReference>
<dbReference type="InterPro" id="IPR017453">
    <property type="entry name" value="GCV_H_sub"/>
</dbReference>
<dbReference type="InterPro" id="IPR011053">
    <property type="entry name" value="Single_hybrid_motif"/>
</dbReference>
<dbReference type="NCBIfam" id="TIGR00527">
    <property type="entry name" value="gcvH"/>
    <property type="match status" value="1"/>
</dbReference>
<dbReference type="NCBIfam" id="NF002270">
    <property type="entry name" value="PRK01202.1"/>
    <property type="match status" value="1"/>
</dbReference>
<dbReference type="PANTHER" id="PTHR11715">
    <property type="entry name" value="GLYCINE CLEAVAGE SYSTEM H PROTEIN"/>
    <property type="match status" value="1"/>
</dbReference>
<dbReference type="PANTHER" id="PTHR11715:SF3">
    <property type="entry name" value="GLYCINE CLEAVAGE SYSTEM H PROTEIN-RELATED"/>
    <property type="match status" value="1"/>
</dbReference>
<dbReference type="Pfam" id="PF01597">
    <property type="entry name" value="GCV_H"/>
    <property type="match status" value="1"/>
</dbReference>
<dbReference type="SUPFAM" id="SSF51230">
    <property type="entry name" value="Single hybrid motif"/>
    <property type="match status" value="1"/>
</dbReference>
<dbReference type="PROSITE" id="PS50968">
    <property type="entry name" value="BIOTINYL_LIPOYL"/>
    <property type="match status" value="1"/>
</dbReference>
<dbReference type="PROSITE" id="PS00189">
    <property type="entry name" value="LIPOYL"/>
    <property type="match status" value="1"/>
</dbReference>
<protein>
    <recommendedName>
        <fullName evidence="1">Glycine cleavage system H protein</fullName>
    </recommendedName>
</protein>